<proteinExistence type="evidence at transcript level"/>
<dbReference type="EMBL" id="BC127310">
    <property type="protein sequence ID" value="AAI27311.1"/>
    <property type="molecule type" value="mRNA"/>
</dbReference>
<dbReference type="RefSeq" id="NP_001090667.1">
    <property type="nucleotide sequence ID" value="NM_001097198.1"/>
</dbReference>
<dbReference type="FunCoup" id="A0JP94">
    <property type="interactions" value="2293"/>
</dbReference>
<dbReference type="STRING" id="8364.ENSXETP00000053459"/>
<dbReference type="PaxDb" id="8364-ENSXETP00000030881"/>
<dbReference type="GeneID" id="100036639"/>
<dbReference type="KEGG" id="xtr:100036639"/>
<dbReference type="AGR" id="Xenbase:XB-GENE-5868140"/>
<dbReference type="CTD" id="25938"/>
<dbReference type="Xenbase" id="XB-GENE-5868140">
    <property type="gene designation" value="heatr5a"/>
</dbReference>
<dbReference type="eggNOG" id="KOG1822">
    <property type="taxonomic scope" value="Eukaryota"/>
</dbReference>
<dbReference type="InParanoid" id="A0JP94"/>
<dbReference type="OrthoDB" id="192608at2759"/>
<dbReference type="Proteomes" id="UP000008143">
    <property type="component" value="Chromosome 8"/>
</dbReference>
<dbReference type="FunFam" id="1.25.10.10:FF:000098">
    <property type="entry name" value="HEAT repeat-containing protein 5A isoform X2"/>
    <property type="match status" value="1"/>
</dbReference>
<dbReference type="FunFam" id="1.25.10.10:FF:000262">
    <property type="entry name" value="HEAT repeat-containing protein 5B"/>
    <property type="match status" value="1"/>
</dbReference>
<dbReference type="Gene3D" id="1.25.10.10">
    <property type="entry name" value="Leucine-rich Repeat Variant"/>
    <property type="match status" value="2"/>
</dbReference>
<dbReference type="InterPro" id="IPR011989">
    <property type="entry name" value="ARM-like"/>
</dbReference>
<dbReference type="InterPro" id="IPR016024">
    <property type="entry name" value="ARM-type_fold"/>
</dbReference>
<dbReference type="InterPro" id="IPR040108">
    <property type="entry name" value="Laa1/Sip1/HEATR5"/>
</dbReference>
<dbReference type="InterPro" id="IPR046837">
    <property type="entry name" value="Laa1/Sip1/HEATR5-like_HEAT"/>
</dbReference>
<dbReference type="PANTHER" id="PTHR21663:SF1">
    <property type="entry name" value="HEAT REPEAT-CONTAINING PROTEIN 5A"/>
    <property type="match status" value="1"/>
</dbReference>
<dbReference type="PANTHER" id="PTHR21663">
    <property type="entry name" value="HYPOTHETICAL HEAT DOMAIN-CONTAINING"/>
    <property type="match status" value="1"/>
</dbReference>
<dbReference type="Pfam" id="PF25468">
    <property type="entry name" value="HEAT_HEATR5A"/>
    <property type="match status" value="1"/>
</dbReference>
<dbReference type="Pfam" id="PF20210">
    <property type="entry name" value="Laa1_Sip1_HTR5"/>
    <property type="match status" value="1"/>
</dbReference>
<dbReference type="SUPFAM" id="SSF48371">
    <property type="entry name" value="ARM repeat"/>
    <property type="match status" value="3"/>
</dbReference>
<gene>
    <name type="primary">heatr5a</name>
</gene>
<protein>
    <recommendedName>
        <fullName>HEAT repeat-containing protein 5A</fullName>
    </recommendedName>
</protein>
<evidence type="ECO:0000256" key="1">
    <source>
        <dbReference type="SAM" id="MobiDB-lite"/>
    </source>
</evidence>
<evidence type="ECO:0000305" key="2"/>
<sequence>MELEERGLQLLDVAELEEPQRGLRVLEWLRHLRRVLPVITRAEIKENQKQLVEQLLLVMMGFPGPPARRLLAYNMAFVYSSGDTFSVYETIDRCNDVIRSKDDSPSYLPSKLAAVACLGALYQKLGRLLGSTFSDTVSNLLKVLRSAESQGRSEIMLSLERILKGLGSAAIPCHRDIYKAARSCLTDRSMSVRCSAAQCLLALQKEASFMWGSDLESLASICFKAFEGSSYEVRLAVARLLGKVLARAMQGATSPRQNARKLSLQEVLGLLSTGFLRGNSGFLRGGGDMLGGTSVTTRHVRLGATQAYIVFIRTLGGHWLARNVPVLLSHSLELISNPKAIQNPTDAACSRCCISYILRATVGELLGEKAQLEAAREICEVIRKLMKTVDAVLSDSNLETRFCTTDISASQHVLVCALQELGDLFLGLGTILAPLLKDSSAGVLDTVLSVSLHPSLSARLAAAWCLRSVIVSLPSLAAPVLDRCVERLTALKSSPEAVSGYSLTAAVLLGSIRLCPLGVPHGKGKVVMSLAKDLLCTASQNSRFSLQRTQAGWLLIASLMTLGPAVVQSQLGCLLLLWRSVFPVTPKDLDTERRRGDAFTWQVTLEGRAGALGAMRSFVSHCGELMSEEVLQRLLPPLPCAIALLTLLPSLQKLYGNSLKACSVLYRQRLYQLLVLLPPKTYEESFCAVMKELVADLTSPDYSPGGAAFLLSSVCHPDDLVLLGPSFQECDQRATEEELLLSSGIPGGSLEYDLHAIYELPSEGESVPKPLPSAFTVIQAASLLFGTLLAHMPESQRPQILQQLVESIKQTKGSRQQSVQLCAMSSLCNFLKHLASSRSNLGPEEMRKPCLSLIQAVLEGNSLWLRCAGVESVARLVQVVDDPTFTAGLIQASFDKLKTARDVVARTSHSLVLGTLHRYLGGINSSQHLASCVGVLHSLSQDTTSPEVQTWALHSLSVITDLSGPLFNVHIEATLSLLLTALITTSPSHPEVHRSLGRCLSALVTALGPELQGNGAVLSSQRTSCLLACSVMQENPDCLVQAQGISCLQQLHMYAPKHVNLSSLVPTLCVHLYSPHLPLRRAVLACLRQLAQREAAEVSEHAMTVAKEGHEDLKMEMNMRELGLEGVLLSLLDRESDQQLLRDVKETLLHMQNCTGLSRLSFWLRMLKDILSASADFAAVASVDTNQEDEGEVACSDSVLTSSKAESLGSSVTPHWKTRIFAMECVCQLITQCELDGGAHFDMAQAQEMKHKEPERDFLVLHLQDLIRMSFMAATDHSEQLRLVGLQALLLVIHRFAAVPEPEFPGHLILEQFQANVLAAVRPAFNTDTPPDVTARACEVCSAWLASGVVKELADLQRVQQLLLTSLRRVQVAKETASVYSESTTAMESLAVLKAWAEVYIAAMEKQVTQSKMAEAQNEVLLSLVQAELLTLSGLWLAALQDHALLTLPAACASQLPSQGGGFYTAETSDAARPHYLLSWAPILHASSLWLSSSGFVLPDQDEGNGHLSRPVTPTSMGQERGSQLPADSPEDLNLERFHLILGISVEFLCCPPVDAPMERITSCLRALKALLSGMWPKAHIGTDQDLAIELISVLHRLLLMRESSEVQLLVLEVGRLIVNAAQDHVRERRRSAEVDDGAEEKETLPVFGEGHDTGGLVPGHSLVVAALELCLCILIRQLPQLSPHLSGGSVVGKTEPLFSEARLLVASSLGILAELPSLCSPEGSVSVLPTLLYLVVGVLQDTTVKFPDGHLTLPVTAALQALKVIVSSPMSQVEKCRASWTRLMQSAVSTLLNSWHLERQLVPDSVSLLTALTIFLLSANPEVMSDPGLQNACVQRFQNSIDSKNPTEQLKCYRLLLSIFKHPVPEVVAPYVCSLAPRIMRHLSQAESRKPQSMEELLVLQEGVNLLKTLVSAVEEQNRPSMVCMLLHLLISFLLDENALGSAPHYSRALHDFGLHSLTSFGASYPTQFRKLMGSSPALRSRLEAALRGNQESLKPKAPSRGTMGGGHGSPSIQLKTNFL</sequence>
<comment type="similarity">
    <text evidence="2">Belongs to the HEATR5 family.</text>
</comment>
<keyword id="KW-1185">Reference proteome</keyword>
<keyword id="KW-0677">Repeat</keyword>
<accession>A0JP94</accession>
<reference key="1">
    <citation type="submission" date="2006-11" db="EMBL/GenBank/DDBJ databases">
        <authorList>
            <consortium name="NIH - Xenopus Gene Collection (XGC) project"/>
        </authorList>
    </citation>
    <scope>NUCLEOTIDE SEQUENCE [LARGE SCALE MRNA]</scope>
    <source>
        <tissue>Testis</tissue>
    </source>
</reference>
<name>HTR5A_XENTR</name>
<feature type="chain" id="PRO_0000311993" description="HEAT repeat-containing protein 5A">
    <location>
        <begin position="1"/>
        <end position="2021"/>
    </location>
</feature>
<feature type="repeat" description="HEAT 1">
    <location>
        <begin position="795"/>
        <end position="836"/>
    </location>
</feature>
<feature type="repeat" description="HEAT 2">
    <location>
        <begin position="1059"/>
        <end position="1096"/>
    </location>
</feature>
<feature type="region of interest" description="Disordered" evidence="1">
    <location>
        <begin position="1503"/>
        <end position="1528"/>
    </location>
</feature>
<feature type="region of interest" description="Disordered" evidence="1">
    <location>
        <begin position="1989"/>
        <end position="2012"/>
    </location>
</feature>
<feature type="compositionally biased region" description="Polar residues" evidence="1">
    <location>
        <begin position="1512"/>
        <end position="1522"/>
    </location>
</feature>
<organism>
    <name type="scientific">Xenopus tropicalis</name>
    <name type="common">Western clawed frog</name>
    <name type="synonym">Silurana tropicalis</name>
    <dbReference type="NCBI Taxonomy" id="8364"/>
    <lineage>
        <taxon>Eukaryota</taxon>
        <taxon>Metazoa</taxon>
        <taxon>Chordata</taxon>
        <taxon>Craniata</taxon>
        <taxon>Vertebrata</taxon>
        <taxon>Euteleostomi</taxon>
        <taxon>Amphibia</taxon>
        <taxon>Batrachia</taxon>
        <taxon>Anura</taxon>
        <taxon>Pipoidea</taxon>
        <taxon>Pipidae</taxon>
        <taxon>Xenopodinae</taxon>
        <taxon>Xenopus</taxon>
        <taxon>Silurana</taxon>
    </lineage>
</organism>